<proteinExistence type="inferred from homology"/>
<comment type="function">
    <text evidence="1">Part of the ABC transporter complex PstSACB involved in phosphate import. Responsible for energy coupling to the transport system.</text>
</comment>
<comment type="catalytic activity">
    <reaction evidence="1">
        <text>phosphate(out) + ATP + H2O = ADP + 2 phosphate(in) + H(+)</text>
        <dbReference type="Rhea" id="RHEA:24440"/>
        <dbReference type="ChEBI" id="CHEBI:15377"/>
        <dbReference type="ChEBI" id="CHEBI:15378"/>
        <dbReference type="ChEBI" id="CHEBI:30616"/>
        <dbReference type="ChEBI" id="CHEBI:43474"/>
        <dbReference type="ChEBI" id="CHEBI:456216"/>
        <dbReference type="EC" id="7.3.2.1"/>
    </reaction>
</comment>
<comment type="subunit">
    <text evidence="1">The complex is composed of two ATP-binding proteins (PstB), two transmembrane proteins (PstC and PstA) and a solute-binding protein (PstS).</text>
</comment>
<comment type="subcellular location">
    <subcellularLocation>
        <location evidence="1">Cell inner membrane</location>
        <topology evidence="1">Peripheral membrane protein</topology>
    </subcellularLocation>
</comment>
<comment type="similarity">
    <text evidence="1">Belongs to the ABC transporter superfamily. Phosphate importer (TC 3.A.1.7) family.</text>
</comment>
<dbReference type="EC" id="7.3.2.1" evidence="1"/>
<dbReference type="EMBL" id="CP000388">
    <property type="protein sequence ID" value="ABG41821.1"/>
    <property type="molecule type" value="Genomic_DNA"/>
</dbReference>
<dbReference type="RefSeq" id="WP_011576051.1">
    <property type="nucleotide sequence ID" value="NC_008228.1"/>
</dbReference>
<dbReference type="SMR" id="Q15QL7"/>
<dbReference type="STRING" id="342610.Patl_3315"/>
<dbReference type="KEGG" id="pat:Patl_3315"/>
<dbReference type="eggNOG" id="COG1117">
    <property type="taxonomic scope" value="Bacteria"/>
</dbReference>
<dbReference type="HOGENOM" id="CLU_000604_1_22_6"/>
<dbReference type="OrthoDB" id="9802264at2"/>
<dbReference type="Proteomes" id="UP000001981">
    <property type="component" value="Chromosome"/>
</dbReference>
<dbReference type="GO" id="GO:0005886">
    <property type="term" value="C:plasma membrane"/>
    <property type="evidence" value="ECO:0007669"/>
    <property type="project" value="UniProtKB-SubCell"/>
</dbReference>
<dbReference type="GO" id="GO:0005524">
    <property type="term" value="F:ATP binding"/>
    <property type="evidence" value="ECO:0007669"/>
    <property type="project" value="UniProtKB-KW"/>
</dbReference>
<dbReference type="GO" id="GO:0016887">
    <property type="term" value="F:ATP hydrolysis activity"/>
    <property type="evidence" value="ECO:0007669"/>
    <property type="project" value="InterPro"/>
</dbReference>
<dbReference type="GO" id="GO:0015415">
    <property type="term" value="F:ATPase-coupled phosphate ion transmembrane transporter activity"/>
    <property type="evidence" value="ECO:0007669"/>
    <property type="project" value="UniProtKB-EC"/>
</dbReference>
<dbReference type="GO" id="GO:0035435">
    <property type="term" value="P:phosphate ion transmembrane transport"/>
    <property type="evidence" value="ECO:0007669"/>
    <property type="project" value="InterPro"/>
</dbReference>
<dbReference type="CDD" id="cd03260">
    <property type="entry name" value="ABC_PstB_phosphate_transporter"/>
    <property type="match status" value="1"/>
</dbReference>
<dbReference type="Gene3D" id="3.40.50.300">
    <property type="entry name" value="P-loop containing nucleotide triphosphate hydrolases"/>
    <property type="match status" value="1"/>
</dbReference>
<dbReference type="InterPro" id="IPR003593">
    <property type="entry name" value="AAA+_ATPase"/>
</dbReference>
<dbReference type="InterPro" id="IPR003439">
    <property type="entry name" value="ABC_transporter-like_ATP-bd"/>
</dbReference>
<dbReference type="InterPro" id="IPR017871">
    <property type="entry name" value="ABC_transporter-like_CS"/>
</dbReference>
<dbReference type="InterPro" id="IPR027417">
    <property type="entry name" value="P-loop_NTPase"/>
</dbReference>
<dbReference type="InterPro" id="IPR005670">
    <property type="entry name" value="PstB-like"/>
</dbReference>
<dbReference type="NCBIfam" id="TIGR00972">
    <property type="entry name" value="3a0107s01c2"/>
    <property type="match status" value="1"/>
</dbReference>
<dbReference type="PANTHER" id="PTHR43423">
    <property type="entry name" value="ABC TRANSPORTER I FAMILY MEMBER 17"/>
    <property type="match status" value="1"/>
</dbReference>
<dbReference type="PANTHER" id="PTHR43423:SF1">
    <property type="entry name" value="ABC TRANSPORTER I FAMILY MEMBER 17"/>
    <property type="match status" value="1"/>
</dbReference>
<dbReference type="Pfam" id="PF00005">
    <property type="entry name" value="ABC_tran"/>
    <property type="match status" value="1"/>
</dbReference>
<dbReference type="SMART" id="SM00382">
    <property type="entry name" value="AAA"/>
    <property type="match status" value="1"/>
</dbReference>
<dbReference type="SUPFAM" id="SSF52540">
    <property type="entry name" value="P-loop containing nucleoside triphosphate hydrolases"/>
    <property type="match status" value="1"/>
</dbReference>
<dbReference type="PROSITE" id="PS00211">
    <property type="entry name" value="ABC_TRANSPORTER_1"/>
    <property type="match status" value="1"/>
</dbReference>
<dbReference type="PROSITE" id="PS50893">
    <property type="entry name" value="ABC_TRANSPORTER_2"/>
    <property type="match status" value="1"/>
</dbReference>
<dbReference type="PROSITE" id="PS51238">
    <property type="entry name" value="PSTB"/>
    <property type="match status" value="1"/>
</dbReference>
<sequence length="290" mass="32385">MNSKSGYNRLFDPMAETGQALDFSQHGLGQKTVGNPFSAKAKMSVRNLNVYYDDKQAIHDVSLDINRNEVMAMIGPSGCGKSTFLRCLNRMNDTIENCSVNGEVTLDEQDIYHKKQDVVPLRARVGIVFQKPNPFPKSIYENVAYGPKVHGLVSRRAQLDEIVEDSLRKASLWDEVKDRLFSPGTGLSGGQQQRLCIARTIAVSPEVILMDEPCSALDPIATARIEELMAELSQNFTIAIVTHSMQQAARVSSRTAYFHMGRLIEVNDTRRVFTNPEHELTEAYITGRFG</sequence>
<gene>
    <name evidence="1" type="primary">pstB</name>
    <name type="ordered locus">Patl_3315</name>
</gene>
<keyword id="KW-0067">ATP-binding</keyword>
<keyword id="KW-0997">Cell inner membrane</keyword>
<keyword id="KW-1003">Cell membrane</keyword>
<keyword id="KW-0472">Membrane</keyword>
<keyword id="KW-0547">Nucleotide-binding</keyword>
<keyword id="KW-0592">Phosphate transport</keyword>
<keyword id="KW-1278">Translocase</keyword>
<keyword id="KW-0813">Transport</keyword>
<evidence type="ECO:0000255" key="1">
    <source>
        <dbReference type="HAMAP-Rule" id="MF_01702"/>
    </source>
</evidence>
<organism>
    <name type="scientific">Pseudoalteromonas atlantica (strain T6c / ATCC BAA-1087)</name>
    <dbReference type="NCBI Taxonomy" id="3042615"/>
    <lineage>
        <taxon>Bacteria</taxon>
        <taxon>Pseudomonadati</taxon>
        <taxon>Pseudomonadota</taxon>
        <taxon>Gammaproteobacteria</taxon>
        <taxon>Alteromonadales</taxon>
        <taxon>Alteromonadaceae</taxon>
        <taxon>Paraglaciecola</taxon>
    </lineage>
</organism>
<protein>
    <recommendedName>
        <fullName evidence="1">Phosphate import ATP-binding protein PstB</fullName>
        <ecNumber evidence="1">7.3.2.1</ecNumber>
    </recommendedName>
    <alternativeName>
        <fullName evidence="1">ABC phosphate transporter</fullName>
    </alternativeName>
    <alternativeName>
        <fullName evidence="1">Phosphate-transporting ATPase</fullName>
    </alternativeName>
</protein>
<feature type="chain" id="PRO_0000272495" description="Phosphate import ATP-binding protein PstB">
    <location>
        <begin position="1"/>
        <end position="290"/>
    </location>
</feature>
<feature type="domain" description="ABC transporter" evidence="1">
    <location>
        <begin position="43"/>
        <end position="285"/>
    </location>
</feature>
<feature type="binding site" evidence="1">
    <location>
        <begin position="75"/>
        <end position="82"/>
    </location>
    <ligand>
        <name>ATP</name>
        <dbReference type="ChEBI" id="CHEBI:30616"/>
    </ligand>
</feature>
<accession>Q15QL7</accession>
<name>PSTB_PSEA6</name>
<reference key="1">
    <citation type="submission" date="2006-06" db="EMBL/GenBank/DDBJ databases">
        <title>Complete sequence of Pseudoalteromonas atlantica T6c.</title>
        <authorList>
            <consortium name="US DOE Joint Genome Institute"/>
            <person name="Copeland A."/>
            <person name="Lucas S."/>
            <person name="Lapidus A."/>
            <person name="Barry K."/>
            <person name="Detter J.C."/>
            <person name="Glavina del Rio T."/>
            <person name="Hammon N."/>
            <person name="Israni S."/>
            <person name="Dalin E."/>
            <person name="Tice H."/>
            <person name="Pitluck S."/>
            <person name="Saunders E."/>
            <person name="Brettin T."/>
            <person name="Bruce D."/>
            <person name="Han C."/>
            <person name="Tapia R."/>
            <person name="Gilna P."/>
            <person name="Schmutz J."/>
            <person name="Larimer F."/>
            <person name="Land M."/>
            <person name="Hauser L."/>
            <person name="Kyrpides N."/>
            <person name="Kim E."/>
            <person name="Karls A.C."/>
            <person name="Bartlett D."/>
            <person name="Higgins B.P."/>
            <person name="Richardson P."/>
        </authorList>
    </citation>
    <scope>NUCLEOTIDE SEQUENCE [LARGE SCALE GENOMIC DNA]</scope>
    <source>
        <strain>T6c / ATCC BAA-1087</strain>
    </source>
</reference>